<evidence type="ECO:0000255" key="1">
    <source>
        <dbReference type="HAMAP-Rule" id="MF_01307"/>
    </source>
</evidence>
<evidence type="ECO:0000305" key="2"/>
<organism>
    <name type="scientific">Ruthia magnifica subsp. Calyptogena magnifica</name>
    <dbReference type="NCBI Taxonomy" id="413404"/>
    <lineage>
        <taxon>Bacteria</taxon>
        <taxon>Pseudomonadati</taxon>
        <taxon>Pseudomonadota</taxon>
        <taxon>Gammaproteobacteria</taxon>
        <taxon>Candidatus Pseudothioglobaceae</taxon>
        <taxon>Candidatus Ruthturnera</taxon>
    </lineage>
</organism>
<feature type="chain" id="PRO_0000323189" description="Small ribosomal subunit protein uS5">
    <location>
        <begin position="1"/>
        <end position="172"/>
    </location>
</feature>
<feature type="domain" description="S5 DRBM" evidence="1">
    <location>
        <begin position="15"/>
        <end position="78"/>
    </location>
</feature>
<accession>A1AVL7</accession>
<proteinExistence type="inferred from homology"/>
<protein>
    <recommendedName>
        <fullName evidence="1">Small ribosomal subunit protein uS5</fullName>
    </recommendedName>
    <alternativeName>
        <fullName evidence="2">30S ribosomal protein S5</fullName>
    </alternativeName>
</protein>
<name>RS5_RUTMC</name>
<gene>
    <name evidence="1" type="primary">rpsE</name>
    <name type="ordered locus">Rmag_0182</name>
</gene>
<dbReference type="EMBL" id="CP000488">
    <property type="protein sequence ID" value="ABL01974.1"/>
    <property type="molecule type" value="Genomic_DNA"/>
</dbReference>
<dbReference type="RefSeq" id="WP_011737600.1">
    <property type="nucleotide sequence ID" value="NC_008610.1"/>
</dbReference>
<dbReference type="SMR" id="A1AVL7"/>
<dbReference type="STRING" id="413404.Rmag_0182"/>
<dbReference type="KEGG" id="rma:Rmag_0182"/>
<dbReference type="eggNOG" id="COG0098">
    <property type="taxonomic scope" value="Bacteria"/>
</dbReference>
<dbReference type="HOGENOM" id="CLU_065898_2_2_6"/>
<dbReference type="OrthoDB" id="9809045at2"/>
<dbReference type="Proteomes" id="UP000002587">
    <property type="component" value="Chromosome"/>
</dbReference>
<dbReference type="GO" id="GO:0015935">
    <property type="term" value="C:small ribosomal subunit"/>
    <property type="evidence" value="ECO:0007669"/>
    <property type="project" value="InterPro"/>
</dbReference>
<dbReference type="GO" id="GO:0019843">
    <property type="term" value="F:rRNA binding"/>
    <property type="evidence" value="ECO:0007669"/>
    <property type="project" value="UniProtKB-UniRule"/>
</dbReference>
<dbReference type="GO" id="GO:0003735">
    <property type="term" value="F:structural constituent of ribosome"/>
    <property type="evidence" value="ECO:0007669"/>
    <property type="project" value="InterPro"/>
</dbReference>
<dbReference type="GO" id="GO:0006412">
    <property type="term" value="P:translation"/>
    <property type="evidence" value="ECO:0007669"/>
    <property type="project" value="UniProtKB-UniRule"/>
</dbReference>
<dbReference type="FunFam" id="3.30.160.20:FF:000001">
    <property type="entry name" value="30S ribosomal protein S5"/>
    <property type="match status" value="1"/>
</dbReference>
<dbReference type="FunFam" id="3.30.230.10:FF:000002">
    <property type="entry name" value="30S ribosomal protein S5"/>
    <property type="match status" value="1"/>
</dbReference>
<dbReference type="Gene3D" id="3.30.160.20">
    <property type="match status" value="1"/>
</dbReference>
<dbReference type="Gene3D" id="3.30.230.10">
    <property type="match status" value="1"/>
</dbReference>
<dbReference type="HAMAP" id="MF_01307_B">
    <property type="entry name" value="Ribosomal_uS5_B"/>
    <property type="match status" value="1"/>
</dbReference>
<dbReference type="InterPro" id="IPR020568">
    <property type="entry name" value="Ribosomal_Su5_D2-typ_SF"/>
</dbReference>
<dbReference type="InterPro" id="IPR000851">
    <property type="entry name" value="Ribosomal_uS5"/>
</dbReference>
<dbReference type="InterPro" id="IPR005712">
    <property type="entry name" value="Ribosomal_uS5_bac-type"/>
</dbReference>
<dbReference type="InterPro" id="IPR005324">
    <property type="entry name" value="Ribosomal_uS5_C"/>
</dbReference>
<dbReference type="InterPro" id="IPR013810">
    <property type="entry name" value="Ribosomal_uS5_N"/>
</dbReference>
<dbReference type="InterPro" id="IPR018192">
    <property type="entry name" value="Ribosomal_uS5_N_CS"/>
</dbReference>
<dbReference type="InterPro" id="IPR014721">
    <property type="entry name" value="Ribsml_uS5_D2-typ_fold_subgr"/>
</dbReference>
<dbReference type="NCBIfam" id="TIGR01021">
    <property type="entry name" value="rpsE_bact"/>
    <property type="match status" value="1"/>
</dbReference>
<dbReference type="PANTHER" id="PTHR48277">
    <property type="entry name" value="MITOCHONDRIAL RIBOSOMAL PROTEIN S5"/>
    <property type="match status" value="1"/>
</dbReference>
<dbReference type="PANTHER" id="PTHR48277:SF1">
    <property type="entry name" value="MITOCHONDRIAL RIBOSOMAL PROTEIN S5"/>
    <property type="match status" value="1"/>
</dbReference>
<dbReference type="Pfam" id="PF00333">
    <property type="entry name" value="Ribosomal_S5"/>
    <property type="match status" value="1"/>
</dbReference>
<dbReference type="Pfam" id="PF03719">
    <property type="entry name" value="Ribosomal_S5_C"/>
    <property type="match status" value="1"/>
</dbReference>
<dbReference type="SUPFAM" id="SSF54768">
    <property type="entry name" value="dsRNA-binding domain-like"/>
    <property type="match status" value="1"/>
</dbReference>
<dbReference type="SUPFAM" id="SSF54211">
    <property type="entry name" value="Ribosomal protein S5 domain 2-like"/>
    <property type="match status" value="1"/>
</dbReference>
<dbReference type="PROSITE" id="PS00585">
    <property type="entry name" value="RIBOSOMAL_S5"/>
    <property type="match status" value="1"/>
</dbReference>
<dbReference type="PROSITE" id="PS50881">
    <property type="entry name" value="S5_DSRBD"/>
    <property type="match status" value="1"/>
</dbReference>
<comment type="function">
    <text evidence="1">With S4 and S12 plays an important role in translational accuracy.</text>
</comment>
<comment type="function">
    <text evidence="1">Located at the back of the 30S subunit body where it stabilizes the conformation of the head with respect to the body.</text>
</comment>
<comment type="subunit">
    <text evidence="1">Part of the 30S ribosomal subunit. Contacts proteins S4 and S8.</text>
</comment>
<comment type="domain">
    <text>The N-terminal domain interacts with the head of the 30S subunit; the C-terminal domain interacts with the body and contacts protein S4. The interaction surface between S4 and S5 is involved in control of translational fidelity.</text>
</comment>
<comment type="similarity">
    <text evidence="1">Belongs to the universal ribosomal protein uS5 family.</text>
</comment>
<reference key="1">
    <citation type="journal article" date="2007" name="Science">
        <title>The Calyptogena magnifica chemoautotrophic symbiont genome.</title>
        <authorList>
            <person name="Newton I.L.G."/>
            <person name="Woyke T."/>
            <person name="Auchtung T.A."/>
            <person name="Dilly G.F."/>
            <person name="Dutton R.J."/>
            <person name="Fisher M.C."/>
            <person name="Fontanez K.M."/>
            <person name="Lau E."/>
            <person name="Stewart F.J."/>
            <person name="Richardson P.M."/>
            <person name="Barry K.W."/>
            <person name="Saunders E."/>
            <person name="Detter J.C."/>
            <person name="Wu D."/>
            <person name="Eisen J.A."/>
            <person name="Cavanaugh C.M."/>
        </authorList>
    </citation>
    <scope>NUCLEOTIDE SEQUENCE [LARGE SCALE GENOMIC DNA]</scope>
</reference>
<sequence length="172" mass="18267">MAEYKKNNNNDDKDYIEKLVNIRRVVKVVKGGRIFGFSALVVVGDGNGKVGYGTGKAREVPVAIQKAMDKARKRMKSVSLVNGTLHYPIVSSVGAAKVYMQPASEGTGVIAGGPMRSVLEAVGVHNILAKCNGTRNPISVVRATVEGLTSMSSPQLVAAKRGKTVDQITRKG</sequence>
<keyword id="KW-0687">Ribonucleoprotein</keyword>
<keyword id="KW-0689">Ribosomal protein</keyword>
<keyword id="KW-0694">RNA-binding</keyword>
<keyword id="KW-0699">rRNA-binding</keyword>